<protein>
    <recommendedName>
        <fullName evidence="1">Small ribosomal subunit protein bS20</fullName>
    </recommendedName>
    <alternativeName>
        <fullName evidence="2">30S ribosomal protein S20</fullName>
    </alternativeName>
</protein>
<name>RS20_METSB</name>
<sequence>MANTPSAKKAVRKIERRTAVNKSRRSQMRTYVRKVEEAIASGDREAATQALRAAEPLVMRAAQKGIVHKNTASRKVSRLSARVSSLGS</sequence>
<evidence type="ECO:0000255" key="1">
    <source>
        <dbReference type="HAMAP-Rule" id="MF_00500"/>
    </source>
</evidence>
<evidence type="ECO:0000305" key="2"/>
<dbReference type="EMBL" id="CP001280">
    <property type="protein sequence ID" value="ACK52803.1"/>
    <property type="molecule type" value="Genomic_DNA"/>
</dbReference>
<dbReference type="RefSeq" id="WP_012592871.1">
    <property type="nucleotide sequence ID" value="NC_011666.1"/>
</dbReference>
<dbReference type="SMR" id="B8EMX4"/>
<dbReference type="STRING" id="395965.Msil_3922"/>
<dbReference type="KEGG" id="msl:Msil_3922"/>
<dbReference type="eggNOG" id="COG0268">
    <property type="taxonomic scope" value="Bacteria"/>
</dbReference>
<dbReference type="HOGENOM" id="CLU_160655_3_0_5"/>
<dbReference type="OrthoDB" id="9807974at2"/>
<dbReference type="Proteomes" id="UP000002257">
    <property type="component" value="Chromosome"/>
</dbReference>
<dbReference type="GO" id="GO:0005829">
    <property type="term" value="C:cytosol"/>
    <property type="evidence" value="ECO:0007669"/>
    <property type="project" value="TreeGrafter"/>
</dbReference>
<dbReference type="GO" id="GO:0015935">
    <property type="term" value="C:small ribosomal subunit"/>
    <property type="evidence" value="ECO:0007669"/>
    <property type="project" value="TreeGrafter"/>
</dbReference>
<dbReference type="GO" id="GO:0070181">
    <property type="term" value="F:small ribosomal subunit rRNA binding"/>
    <property type="evidence" value="ECO:0007669"/>
    <property type="project" value="TreeGrafter"/>
</dbReference>
<dbReference type="GO" id="GO:0003735">
    <property type="term" value="F:structural constituent of ribosome"/>
    <property type="evidence" value="ECO:0007669"/>
    <property type="project" value="InterPro"/>
</dbReference>
<dbReference type="GO" id="GO:0006412">
    <property type="term" value="P:translation"/>
    <property type="evidence" value="ECO:0007669"/>
    <property type="project" value="UniProtKB-UniRule"/>
</dbReference>
<dbReference type="FunFam" id="1.20.58.110:FF:000001">
    <property type="entry name" value="30S ribosomal protein S20"/>
    <property type="match status" value="1"/>
</dbReference>
<dbReference type="Gene3D" id="1.20.58.110">
    <property type="entry name" value="Ribosomal protein S20"/>
    <property type="match status" value="1"/>
</dbReference>
<dbReference type="HAMAP" id="MF_00500">
    <property type="entry name" value="Ribosomal_bS20"/>
    <property type="match status" value="1"/>
</dbReference>
<dbReference type="InterPro" id="IPR002583">
    <property type="entry name" value="Ribosomal_bS20"/>
</dbReference>
<dbReference type="InterPro" id="IPR036510">
    <property type="entry name" value="Ribosomal_bS20_sf"/>
</dbReference>
<dbReference type="NCBIfam" id="TIGR00029">
    <property type="entry name" value="S20"/>
    <property type="match status" value="1"/>
</dbReference>
<dbReference type="PANTHER" id="PTHR33398">
    <property type="entry name" value="30S RIBOSOMAL PROTEIN S20"/>
    <property type="match status" value="1"/>
</dbReference>
<dbReference type="PANTHER" id="PTHR33398:SF1">
    <property type="entry name" value="SMALL RIBOSOMAL SUBUNIT PROTEIN BS20C"/>
    <property type="match status" value="1"/>
</dbReference>
<dbReference type="Pfam" id="PF01649">
    <property type="entry name" value="Ribosomal_S20p"/>
    <property type="match status" value="1"/>
</dbReference>
<dbReference type="SUPFAM" id="SSF46992">
    <property type="entry name" value="Ribosomal protein S20"/>
    <property type="match status" value="1"/>
</dbReference>
<comment type="function">
    <text evidence="1">Binds directly to 16S ribosomal RNA.</text>
</comment>
<comment type="similarity">
    <text evidence="1">Belongs to the bacterial ribosomal protein bS20 family.</text>
</comment>
<reference key="1">
    <citation type="journal article" date="2010" name="J. Bacteriol.">
        <title>Complete genome sequence of the aerobic facultative methanotroph Methylocella silvestris BL2.</title>
        <authorList>
            <person name="Chen Y."/>
            <person name="Crombie A."/>
            <person name="Rahman M.T."/>
            <person name="Dedysh S.N."/>
            <person name="Liesack W."/>
            <person name="Stott M.B."/>
            <person name="Alam M."/>
            <person name="Theisen A.R."/>
            <person name="Murrell J.C."/>
            <person name="Dunfield P.F."/>
        </authorList>
    </citation>
    <scope>NUCLEOTIDE SEQUENCE [LARGE SCALE GENOMIC DNA]</scope>
    <source>
        <strain>DSM 15510 / CIP 108128 / LMG 27833 / NCIMB 13906 / BL2</strain>
    </source>
</reference>
<feature type="chain" id="PRO_1000194253" description="Small ribosomal subunit protein bS20">
    <location>
        <begin position="1"/>
        <end position="88"/>
    </location>
</feature>
<keyword id="KW-1185">Reference proteome</keyword>
<keyword id="KW-0687">Ribonucleoprotein</keyword>
<keyword id="KW-0689">Ribosomal protein</keyword>
<keyword id="KW-0694">RNA-binding</keyword>
<keyword id="KW-0699">rRNA-binding</keyword>
<organism>
    <name type="scientific">Methylocella silvestris (strain DSM 15510 / CIP 108128 / LMG 27833 / NCIMB 13906 / BL2)</name>
    <dbReference type="NCBI Taxonomy" id="395965"/>
    <lineage>
        <taxon>Bacteria</taxon>
        <taxon>Pseudomonadati</taxon>
        <taxon>Pseudomonadota</taxon>
        <taxon>Alphaproteobacteria</taxon>
        <taxon>Hyphomicrobiales</taxon>
        <taxon>Beijerinckiaceae</taxon>
        <taxon>Methylocella</taxon>
    </lineage>
</organism>
<accession>B8EMX4</accession>
<proteinExistence type="inferred from homology"/>
<gene>
    <name evidence="1" type="primary">rpsT</name>
    <name type="ordered locus">Msil_3922</name>
</gene>